<keyword id="KW-1185">Reference proteome</keyword>
<organism>
    <name type="scientific">Homo sapiens</name>
    <name type="common">Human</name>
    <dbReference type="NCBI Taxonomy" id="9606"/>
    <lineage>
        <taxon>Eukaryota</taxon>
        <taxon>Metazoa</taxon>
        <taxon>Chordata</taxon>
        <taxon>Craniata</taxon>
        <taxon>Vertebrata</taxon>
        <taxon>Euteleostomi</taxon>
        <taxon>Mammalia</taxon>
        <taxon>Eutheria</taxon>
        <taxon>Euarchontoglires</taxon>
        <taxon>Primates</taxon>
        <taxon>Haplorrhini</taxon>
        <taxon>Catarrhini</taxon>
        <taxon>Hominidae</taxon>
        <taxon>Homo</taxon>
    </lineage>
</organism>
<protein>
    <recommendedName>
        <fullName>SCP2 sterol-binding domain-containing protein 1</fullName>
    </recommendedName>
</protein>
<accession>Q9UJQ7</accession>
<accession>Q548A4</accession>
<sequence>MWKRSDHQPKIKAEDGPLVGQFEVLGSVPEPAMPHPLELSEFESFPVFQDIRLHIREVGAQLVKKVNAVFQLDITKNGKTILRWTIDLKNGSGDMYPGPARLPADTVFTIPESVFMELVLGKMNPQKAFLAGKFKVSGKVLLSWKLERVFKDWAKF</sequence>
<gene>
    <name type="primary">SCP2D1</name>
    <name type="synonym">C20orf79</name>
</gene>
<name>SCP2D_HUMAN</name>
<dbReference type="EMBL" id="AF418568">
    <property type="protein sequence ID" value="AAP97287.1"/>
    <property type="molecule type" value="mRNA"/>
</dbReference>
<dbReference type="EMBL" id="AF418570">
    <property type="protein sequence ID" value="AAP97289.1"/>
    <property type="molecule type" value="mRNA"/>
</dbReference>
<dbReference type="EMBL" id="AL035563">
    <property type="status" value="NOT_ANNOTATED_CDS"/>
    <property type="molecule type" value="Genomic_DNA"/>
</dbReference>
<dbReference type="EMBL" id="BC105121">
    <property type="protein sequence ID" value="AAI05122.1"/>
    <property type="molecule type" value="mRNA"/>
</dbReference>
<dbReference type="EMBL" id="BC112024">
    <property type="protein sequence ID" value="AAI12025.1"/>
    <property type="molecule type" value="mRNA"/>
</dbReference>
<dbReference type="CCDS" id="CCDS13139.1"/>
<dbReference type="RefSeq" id="NP_848578.1">
    <property type="nucleotide sequence ID" value="NM_178483.3"/>
</dbReference>
<dbReference type="SMR" id="Q9UJQ7"/>
<dbReference type="BioGRID" id="126736">
    <property type="interactions" value="2"/>
</dbReference>
<dbReference type="FunCoup" id="Q9UJQ7">
    <property type="interactions" value="63"/>
</dbReference>
<dbReference type="IntAct" id="Q9UJQ7">
    <property type="interactions" value="2"/>
</dbReference>
<dbReference type="STRING" id="9606.ENSP00000366645"/>
<dbReference type="BioMuta" id="SCP2D1"/>
<dbReference type="MassIVE" id="Q9UJQ7"/>
<dbReference type="PaxDb" id="9606-ENSP00000366645"/>
<dbReference type="PeptideAtlas" id="Q9UJQ7"/>
<dbReference type="Antibodypedia" id="24632">
    <property type="antibodies" value="76 antibodies from 10 providers"/>
</dbReference>
<dbReference type="DNASU" id="140856"/>
<dbReference type="Ensembl" id="ENST00000377428.4">
    <property type="protein sequence ID" value="ENSP00000366645.2"/>
    <property type="gene ID" value="ENSG00000132631.6"/>
</dbReference>
<dbReference type="GeneID" id="140856"/>
<dbReference type="KEGG" id="hsa:140856"/>
<dbReference type="MANE-Select" id="ENST00000377428.4">
    <property type="protein sequence ID" value="ENSP00000366645.2"/>
    <property type="RefSeq nucleotide sequence ID" value="NM_178483.3"/>
    <property type="RefSeq protein sequence ID" value="NP_848578.1"/>
</dbReference>
<dbReference type="UCSC" id="uc002wrk.4">
    <property type="organism name" value="human"/>
</dbReference>
<dbReference type="AGR" id="HGNC:16211"/>
<dbReference type="CTD" id="140856"/>
<dbReference type="DisGeNET" id="140856"/>
<dbReference type="GeneCards" id="SCP2D1"/>
<dbReference type="HGNC" id="HGNC:16211">
    <property type="gene designation" value="SCP2D1"/>
</dbReference>
<dbReference type="HPA" id="ENSG00000132631">
    <property type="expression patterns" value="Tissue enriched (testis)"/>
</dbReference>
<dbReference type="neXtProt" id="NX_Q9UJQ7"/>
<dbReference type="OpenTargets" id="ENSG00000132631"/>
<dbReference type="PharmGKB" id="PA25788"/>
<dbReference type="VEuPathDB" id="HostDB:ENSG00000132631"/>
<dbReference type="eggNOG" id="KOG4170">
    <property type="taxonomic scope" value="Eukaryota"/>
</dbReference>
<dbReference type="GeneTree" id="ENSGT00940000154327"/>
<dbReference type="HOGENOM" id="CLU_105945_3_1_1"/>
<dbReference type="InParanoid" id="Q9UJQ7"/>
<dbReference type="OMA" id="WDIMNGG"/>
<dbReference type="OrthoDB" id="3592703at2759"/>
<dbReference type="PAN-GO" id="Q9UJQ7">
    <property type="GO annotations" value="4 GO annotations based on evolutionary models"/>
</dbReference>
<dbReference type="PhylomeDB" id="Q9UJQ7"/>
<dbReference type="TreeFam" id="TF343860"/>
<dbReference type="PathwayCommons" id="Q9UJQ7"/>
<dbReference type="BioGRID-ORCS" id="140856">
    <property type="hits" value="12 hits in 1147 CRISPR screens"/>
</dbReference>
<dbReference type="GenomeRNAi" id="140856"/>
<dbReference type="Pharos" id="Q9UJQ7">
    <property type="development level" value="Tdark"/>
</dbReference>
<dbReference type="PRO" id="PR:Q9UJQ7"/>
<dbReference type="Proteomes" id="UP000005640">
    <property type="component" value="Chromosome 20"/>
</dbReference>
<dbReference type="RNAct" id="Q9UJQ7">
    <property type="molecule type" value="protein"/>
</dbReference>
<dbReference type="Bgee" id="ENSG00000132631">
    <property type="expression patterns" value="Expressed in male germ line stem cell (sensu Vertebrata) in testis and 30 other cell types or tissues"/>
</dbReference>
<dbReference type="GO" id="GO:0005829">
    <property type="term" value="C:cytosol"/>
    <property type="evidence" value="ECO:0000318"/>
    <property type="project" value="GO_Central"/>
</dbReference>
<dbReference type="FunFam" id="3.30.1050.10:FF:000001">
    <property type="entry name" value="Putative Non-specific lipid-transfer protein"/>
    <property type="match status" value="1"/>
</dbReference>
<dbReference type="Gene3D" id="3.30.1050.10">
    <property type="entry name" value="SCP2 sterol-binding domain"/>
    <property type="match status" value="1"/>
</dbReference>
<dbReference type="InterPro" id="IPR003033">
    <property type="entry name" value="SCP2_sterol-bd_dom"/>
</dbReference>
<dbReference type="InterPro" id="IPR036527">
    <property type="entry name" value="SCP2_sterol-bd_dom_sf"/>
</dbReference>
<dbReference type="PANTHER" id="PTHR10094:SF25">
    <property type="entry name" value="SCP2 STEROL-BINDING DOMAIN-CONTAINING PROTEIN 1"/>
    <property type="match status" value="1"/>
</dbReference>
<dbReference type="PANTHER" id="PTHR10094">
    <property type="entry name" value="STEROL CARRIER PROTEIN 2 SCP-2 FAMILY PROTEIN"/>
    <property type="match status" value="1"/>
</dbReference>
<dbReference type="Pfam" id="PF02036">
    <property type="entry name" value="SCP2"/>
    <property type="match status" value="1"/>
</dbReference>
<dbReference type="SUPFAM" id="SSF55718">
    <property type="entry name" value="SCP-like"/>
    <property type="match status" value="1"/>
</dbReference>
<proteinExistence type="evidence at transcript level"/>
<feature type="chain" id="PRO_0000079444" description="SCP2 sterol-binding domain-containing protein 1">
    <location>
        <begin position="1"/>
        <end position="156"/>
    </location>
</feature>
<feature type="domain" description="SCP2">
    <location>
        <begin position="44"/>
        <end position="156"/>
    </location>
</feature>
<feature type="sequence variant" id="VAR_024332" description="In dbSNP:rs1053839.">
    <original>P</original>
    <variation>S</variation>
    <location>
        <position position="99"/>
    </location>
</feature>
<reference key="1">
    <citation type="submission" date="2001-09" db="EMBL/GenBank/DDBJ databases">
        <title>Molecular cloning of a new cDNA encoding a protein containing a Pfam domain.</title>
        <authorList>
            <person name="Guo J.H."/>
            <person name="She X.Y."/>
            <person name="Yu L."/>
        </authorList>
    </citation>
    <scope>NUCLEOTIDE SEQUENCE [MRNA]</scope>
</reference>
<reference key="2">
    <citation type="journal article" date="2001" name="Nature">
        <title>The DNA sequence and comparative analysis of human chromosome 20.</title>
        <authorList>
            <person name="Deloukas P."/>
            <person name="Matthews L.H."/>
            <person name="Ashurst J.L."/>
            <person name="Burton J."/>
            <person name="Gilbert J.G.R."/>
            <person name="Jones M."/>
            <person name="Stavrides G."/>
            <person name="Almeida J.P."/>
            <person name="Babbage A.K."/>
            <person name="Bagguley C.L."/>
            <person name="Bailey J."/>
            <person name="Barlow K.F."/>
            <person name="Bates K.N."/>
            <person name="Beard L.M."/>
            <person name="Beare D.M."/>
            <person name="Beasley O.P."/>
            <person name="Bird C.P."/>
            <person name="Blakey S.E."/>
            <person name="Bridgeman A.M."/>
            <person name="Brown A.J."/>
            <person name="Buck D."/>
            <person name="Burrill W.D."/>
            <person name="Butler A.P."/>
            <person name="Carder C."/>
            <person name="Carter N.P."/>
            <person name="Chapman J.C."/>
            <person name="Clamp M."/>
            <person name="Clark G."/>
            <person name="Clark L.N."/>
            <person name="Clark S.Y."/>
            <person name="Clee C.M."/>
            <person name="Clegg S."/>
            <person name="Cobley V.E."/>
            <person name="Collier R.E."/>
            <person name="Connor R.E."/>
            <person name="Corby N.R."/>
            <person name="Coulson A."/>
            <person name="Coville G.J."/>
            <person name="Deadman R."/>
            <person name="Dhami P.D."/>
            <person name="Dunn M."/>
            <person name="Ellington A.G."/>
            <person name="Frankland J.A."/>
            <person name="Fraser A."/>
            <person name="French L."/>
            <person name="Garner P."/>
            <person name="Grafham D.V."/>
            <person name="Griffiths C."/>
            <person name="Griffiths M.N.D."/>
            <person name="Gwilliam R."/>
            <person name="Hall R.E."/>
            <person name="Hammond S."/>
            <person name="Harley J.L."/>
            <person name="Heath P.D."/>
            <person name="Ho S."/>
            <person name="Holden J.L."/>
            <person name="Howden P.J."/>
            <person name="Huckle E."/>
            <person name="Hunt A.R."/>
            <person name="Hunt S.E."/>
            <person name="Jekosch K."/>
            <person name="Johnson C.M."/>
            <person name="Johnson D."/>
            <person name="Kay M.P."/>
            <person name="Kimberley A.M."/>
            <person name="King A."/>
            <person name="Knights A."/>
            <person name="Laird G.K."/>
            <person name="Lawlor S."/>
            <person name="Lehvaeslaiho M.H."/>
            <person name="Leversha M.A."/>
            <person name="Lloyd C."/>
            <person name="Lloyd D.M."/>
            <person name="Lovell J.D."/>
            <person name="Marsh V.L."/>
            <person name="Martin S.L."/>
            <person name="McConnachie L.J."/>
            <person name="McLay K."/>
            <person name="McMurray A.A."/>
            <person name="Milne S.A."/>
            <person name="Mistry D."/>
            <person name="Moore M.J.F."/>
            <person name="Mullikin J.C."/>
            <person name="Nickerson T."/>
            <person name="Oliver K."/>
            <person name="Parker A."/>
            <person name="Patel R."/>
            <person name="Pearce T.A.V."/>
            <person name="Peck A.I."/>
            <person name="Phillimore B.J.C.T."/>
            <person name="Prathalingam S.R."/>
            <person name="Plumb R.W."/>
            <person name="Ramsay H."/>
            <person name="Rice C.M."/>
            <person name="Ross M.T."/>
            <person name="Scott C.E."/>
            <person name="Sehra H.K."/>
            <person name="Shownkeen R."/>
            <person name="Sims S."/>
            <person name="Skuce C.D."/>
            <person name="Smith M.L."/>
            <person name="Soderlund C."/>
            <person name="Steward C.A."/>
            <person name="Sulston J.E."/>
            <person name="Swann R.M."/>
            <person name="Sycamore N."/>
            <person name="Taylor R."/>
            <person name="Tee L."/>
            <person name="Thomas D.W."/>
            <person name="Thorpe A."/>
            <person name="Tracey A."/>
            <person name="Tromans A.C."/>
            <person name="Vaudin M."/>
            <person name="Wall M."/>
            <person name="Wallis J.M."/>
            <person name="Whitehead S.L."/>
            <person name="Whittaker P."/>
            <person name="Willey D.L."/>
            <person name="Williams L."/>
            <person name="Williams S.A."/>
            <person name="Wilming L."/>
            <person name="Wray P.W."/>
            <person name="Hubbard T."/>
            <person name="Durbin R.M."/>
            <person name="Bentley D.R."/>
            <person name="Beck S."/>
            <person name="Rogers J."/>
        </authorList>
    </citation>
    <scope>NUCLEOTIDE SEQUENCE [LARGE SCALE GENOMIC DNA]</scope>
</reference>
<reference key="3">
    <citation type="journal article" date="2004" name="Genome Res.">
        <title>The status, quality, and expansion of the NIH full-length cDNA project: the Mammalian Gene Collection (MGC).</title>
        <authorList>
            <consortium name="The MGC Project Team"/>
        </authorList>
    </citation>
    <scope>NUCLEOTIDE SEQUENCE [LARGE SCALE MRNA]</scope>
</reference>